<reference key="1">
    <citation type="journal article" date="2013" name="Nature">
        <title>The zebrafish reference genome sequence and its relationship to the human genome.</title>
        <authorList>
            <person name="Howe K."/>
            <person name="Clark M.D."/>
            <person name="Torroja C.F."/>
            <person name="Torrance J."/>
            <person name="Berthelot C."/>
            <person name="Muffato M."/>
            <person name="Collins J.E."/>
            <person name="Humphray S."/>
            <person name="McLaren K."/>
            <person name="Matthews L."/>
            <person name="McLaren S."/>
            <person name="Sealy I."/>
            <person name="Caccamo M."/>
            <person name="Churcher C."/>
            <person name="Scott C."/>
            <person name="Barrett J.C."/>
            <person name="Koch R."/>
            <person name="Rauch G.J."/>
            <person name="White S."/>
            <person name="Chow W."/>
            <person name="Kilian B."/>
            <person name="Quintais L.T."/>
            <person name="Guerra-Assuncao J.A."/>
            <person name="Zhou Y."/>
            <person name="Gu Y."/>
            <person name="Yen J."/>
            <person name="Vogel J.H."/>
            <person name="Eyre T."/>
            <person name="Redmond S."/>
            <person name="Banerjee R."/>
            <person name="Chi J."/>
            <person name="Fu B."/>
            <person name="Langley E."/>
            <person name="Maguire S.F."/>
            <person name="Laird G.K."/>
            <person name="Lloyd D."/>
            <person name="Kenyon E."/>
            <person name="Donaldson S."/>
            <person name="Sehra H."/>
            <person name="Almeida-King J."/>
            <person name="Loveland J."/>
            <person name="Trevanion S."/>
            <person name="Jones M."/>
            <person name="Quail M."/>
            <person name="Willey D."/>
            <person name="Hunt A."/>
            <person name="Burton J."/>
            <person name="Sims S."/>
            <person name="McLay K."/>
            <person name="Plumb B."/>
            <person name="Davis J."/>
            <person name="Clee C."/>
            <person name="Oliver K."/>
            <person name="Clark R."/>
            <person name="Riddle C."/>
            <person name="Elliot D."/>
            <person name="Threadgold G."/>
            <person name="Harden G."/>
            <person name="Ware D."/>
            <person name="Begum S."/>
            <person name="Mortimore B."/>
            <person name="Kerry G."/>
            <person name="Heath P."/>
            <person name="Phillimore B."/>
            <person name="Tracey A."/>
            <person name="Corby N."/>
            <person name="Dunn M."/>
            <person name="Johnson C."/>
            <person name="Wood J."/>
            <person name="Clark S."/>
            <person name="Pelan S."/>
            <person name="Griffiths G."/>
            <person name="Smith M."/>
            <person name="Glithero R."/>
            <person name="Howden P."/>
            <person name="Barker N."/>
            <person name="Lloyd C."/>
            <person name="Stevens C."/>
            <person name="Harley J."/>
            <person name="Holt K."/>
            <person name="Panagiotidis G."/>
            <person name="Lovell J."/>
            <person name="Beasley H."/>
            <person name="Henderson C."/>
            <person name="Gordon D."/>
            <person name="Auger K."/>
            <person name="Wright D."/>
            <person name="Collins J."/>
            <person name="Raisen C."/>
            <person name="Dyer L."/>
            <person name="Leung K."/>
            <person name="Robertson L."/>
            <person name="Ambridge K."/>
            <person name="Leongamornlert D."/>
            <person name="McGuire S."/>
            <person name="Gilderthorp R."/>
            <person name="Griffiths C."/>
            <person name="Manthravadi D."/>
            <person name="Nichol S."/>
            <person name="Barker G."/>
            <person name="Whitehead S."/>
            <person name="Kay M."/>
            <person name="Brown J."/>
            <person name="Murnane C."/>
            <person name="Gray E."/>
            <person name="Humphries M."/>
            <person name="Sycamore N."/>
            <person name="Barker D."/>
            <person name="Saunders D."/>
            <person name="Wallis J."/>
            <person name="Babbage A."/>
            <person name="Hammond S."/>
            <person name="Mashreghi-Mohammadi M."/>
            <person name="Barr L."/>
            <person name="Martin S."/>
            <person name="Wray P."/>
            <person name="Ellington A."/>
            <person name="Matthews N."/>
            <person name="Ellwood M."/>
            <person name="Woodmansey R."/>
            <person name="Clark G."/>
            <person name="Cooper J."/>
            <person name="Tromans A."/>
            <person name="Grafham D."/>
            <person name="Skuce C."/>
            <person name="Pandian R."/>
            <person name="Andrews R."/>
            <person name="Harrison E."/>
            <person name="Kimberley A."/>
            <person name="Garnett J."/>
            <person name="Fosker N."/>
            <person name="Hall R."/>
            <person name="Garner P."/>
            <person name="Kelly D."/>
            <person name="Bird C."/>
            <person name="Palmer S."/>
            <person name="Gehring I."/>
            <person name="Berger A."/>
            <person name="Dooley C.M."/>
            <person name="Ersan-Urun Z."/>
            <person name="Eser C."/>
            <person name="Geiger H."/>
            <person name="Geisler M."/>
            <person name="Karotki L."/>
            <person name="Kirn A."/>
            <person name="Konantz J."/>
            <person name="Konantz M."/>
            <person name="Oberlander M."/>
            <person name="Rudolph-Geiger S."/>
            <person name="Teucke M."/>
            <person name="Lanz C."/>
            <person name="Raddatz G."/>
            <person name="Osoegawa K."/>
            <person name="Zhu B."/>
            <person name="Rapp A."/>
            <person name="Widaa S."/>
            <person name="Langford C."/>
            <person name="Yang F."/>
            <person name="Schuster S.C."/>
            <person name="Carter N.P."/>
            <person name="Harrow J."/>
            <person name="Ning Z."/>
            <person name="Herrero J."/>
            <person name="Searle S.M."/>
            <person name="Enright A."/>
            <person name="Geisler R."/>
            <person name="Plasterk R.H."/>
            <person name="Lee C."/>
            <person name="Westerfield M."/>
            <person name="de Jong P.J."/>
            <person name="Zon L.I."/>
            <person name="Postlethwait J.H."/>
            <person name="Nusslein-Volhard C."/>
            <person name="Hubbard T.J."/>
            <person name="Roest Crollius H."/>
            <person name="Rogers J."/>
            <person name="Stemple D.L."/>
        </authorList>
    </citation>
    <scope>NUCLEOTIDE SEQUENCE [LARGE SCALE GENOMIC DNA]</scope>
    <source>
        <strain>Tuebingen</strain>
    </source>
</reference>
<reference key="2">
    <citation type="journal article" date="2015" name="Am. J. Hum. Genet.">
        <title>Genetic Defects in TAPT1 Disrupt Ciliogenesis and Cause a Complex Lethal Osteochondrodysplasia.</title>
        <authorList>
            <person name="Symoens S."/>
            <person name="Barnes A.M."/>
            <person name="Gistelinck C."/>
            <person name="Malfait F."/>
            <person name="Guillemyn B."/>
            <person name="Steyaert W."/>
            <person name="Syx D."/>
            <person name="D'hondt S."/>
            <person name="Biervliet M."/>
            <person name="De Backer J."/>
            <person name="Witten E.P."/>
            <person name="Leikin S."/>
            <person name="Makareeva E."/>
            <person name="Gillessen-Kaesbach G."/>
            <person name="Huysseune A."/>
            <person name="Vleminckx K."/>
            <person name="Willaert A."/>
            <person name="De Paepe A."/>
            <person name="Marini J.C."/>
            <person name="Coucke P.J."/>
        </authorList>
    </citation>
    <scope>FUNCTION</scope>
    <scope>DEVELOPMENTAL STAGE</scope>
</reference>
<accession>A2BIE7</accession>
<protein>
    <recommendedName>
        <fullName>Transmembrane anterior posterior transformation protein 1 homolog</fullName>
    </recommendedName>
</protein>
<comment type="function">
    <text evidence="1 5">Plays a role in primary cilia formation (PubMed:26365339). Involved in cartilage and bone development (PubMed:26365339). May play a role in the differentiation of cranial neural crest cells (PubMed:26365339). May act as a downstream effector of hoxc8 during development (By similarity).</text>
</comment>
<comment type="subcellular location">
    <subcellularLocation>
        <location evidence="2">Cytoplasm</location>
        <location evidence="2">Cytoskeleton</location>
        <location evidence="2">Microtubule organizing center</location>
        <location evidence="2">Centrosome</location>
    </subcellularLocation>
    <subcellularLocation>
        <location evidence="2">Cytoplasm</location>
        <location evidence="2">Cytoskeleton</location>
        <location evidence="2">Cilium basal body</location>
    </subcellularLocation>
    <subcellularLocation>
        <location evidence="2">Membrane</location>
        <topology evidence="2">Multi-pass membrane protein</topology>
    </subcellularLocation>
</comment>
<comment type="developmental stage">
    <text evidence="5">Expressed in the otic vesicle at 1 days post fertilization (dpf) (PubMed:26365339). Expressed in mesenchyme pectoral fins surrounding the cartilage of the endoskeletal disc, and in the epithelial cells of the oral cavity at 3 dpf (PubMed:26365339). Expressed weakly in the pronephric duct and the liver at 3 dpf (PubMed:26365339).</text>
</comment>
<comment type="similarity">
    <text evidence="6">Belongs to the TAPT1 family.</text>
</comment>
<gene>
    <name type="primary">tapt1</name>
    <name type="synonym">tapt1b</name>
    <name type="ORF">si:dkey-92j12.3</name>
</gene>
<keyword id="KW-0966">Cell projection</keyword>
<keyword id="KW-0891">Chondrogenesis</keyword>
<keyword id="KW-0969">Cilium</keyword>
<keyword id="KW-0970">Cilium biogenesis/degradation</keyword>
<keyword id="KW-0963">Cytoplasm</keyword>
<keyword id="KW-0206">Cytoskeleton</keyword>
<keyword id="KW-0217">Developmental protein</keyword>
<keyword id="KW-0221">Differentiation</keyword>
<keyword id="KW-0472">Membrane</keyword>
<keyword id="KW-0892">Osteogenesis</keyword>
<keyword id="KW-1185">Reference proteome</keyword>
<keyword id="KW-0812">Transmembrane</keyword>
<keyword id="KW-1133">Transmembrane helix</keyword>
<sequence length="567" mass="64778">MADSVAAGLGDENETENEDKEREKRLFSGVKKMEKQAAASDVTETLGFYERKAKCKDRKTNVSDLSLVRFISAELTRGYFLEHNEAKYTERRERVYTCLRIPKELEKLMIFGYFLCLDVFLYVFTLLPLRVLLALVRLLTLPCCGLSGSRILQPAQVCDVLKGFIMVLCYFMMHYVDYSMMYHLIRGQSVIKLYIIYNMLEVADRLFSSFGQDILDALYWTATEPKERKRAHIGVIPHFFMAVLYVFLHAILIMVQATTLNVAFNSHNKSLLTIMMSNNFVEIKGSVFKKFEKNNLFQMSNSDIKERFTNYTLLLIVCLRNMEQFSWNPDHLWVLFPDVCMVIASEIAVDVVKHAFITKFNDITADVYSEYRASLAFDLVSSRQKNAYTDYSDSVSRRMGFIPLPLALLLIRVVTSSVKIQGSLSIVCVLLFYLGMITLKVLNSIVLLGKSCMYVKEANMEEKLFQNPPSAAPSRVSSRAHRTKHTREPPGDPAEEGMSASVTTQPTQQDECPAPQIPTSESDQFLTTPDESEEKSLIQDDSELKHRAPKKDLLEIDRFTICGNRID</sequence>
<feature type="chain" id="PRO_0000328875" description="Transmembrane anterior posterior transformation protein 1 homolog">
    <location>
        <begin position="1"/>
        <end position="567"/>
    </location>
</feature>
<feature type="transmembrane region" description="Helical" evidence="3">
    <location>
        <begin position="108"/>
        <end position="128"/>
    </location>
</feature>
<feature type="transmembrane region" description="Helical" evidence="3">
    <location>
        <begin position="165"/>
        <end position="185"/>
    </location>
</feature>
<feature type="transmembrane region" description="Helical" evidence="3">
    <location>
        <begin position="233"/>
        <end position="253"/>
    </location>
</feature>
<feature type="transmembrane region" description="Helical" evidence="3">
    <location>
        <begin position="332"/>
        <end position="352"/>
    </location>
</feature>
<feature type="transmembrane region" description="Helical" evidence="3">
    <location>
        <begin position="400"/>
        <end position="420"/>
    </location>
</feature>
<feature type="transmembrane region" description="Helical" evidence="3">
    <location>
        <begin position="426"/>
        <end position="446"/>
    </location>
</feature>
<feature type="region of interest" description="Disordered" evidence="4">
    <location>
        <begin position="1"/>
        <end position="23"/>
    </location>
</feature>
<feature type="region of interest" description="Disordered" evidence="4">
    <location>
        <begin position="465"/>
        <end position="543"/>
    </location>
</feature>
<feature type="compositionally biased region" description="Low complexity" evidence="4">
    <location>
        <begin position="468"/>
        <end position="477"/>
    </location>
</feature>
<feature type="compositionally biased region" description="Polar residues" evidence="4">
    <location>
        <begin position="500"/>
        <end position="510"/>
    </location>
</feature>
<feature type="compositionally biased region" description="Polar residues" evidence="4">
    <location>
        <begin position="517"/>
        <end position="529"/>
    </location>
</feature>
<feature type="compositionally biased region" description="Basic and acidic residues" evidence="4">
    <location>
        <begin position="534"/>
        <end position="543"/>
    </location>
</feature>
<dbReference type="EMBL" id="BX908795">
    <property type="protein sequence ID" value="CAM16491.1"/>
    <property type="molecule type" value="Genomic_DNA"/>
</dbReference>
<dbReference type="RefSeq" id="NP_001116722.1">
    <property type="nucleotide sequence ID" value="NM_001123250.1"/>
</dbReference>
<dbReference type="SMR" id="A2BIE7"/>
<dbReference type="FunCoup" id="A2BIE7">
    <property type="interactions" value="896"/>
</dbReference>
<dbReference type="STRING" id="7955.ENSDARP00000081301"/>
<dbReference type="PaxDb" id="7955-ENSDARP00000081301"/>
<dbReference type="Ensembl" id="ENSDART00000086867">
    <property type="protein sequence ID" value="ENSDARP00000081301"/>
    <property type="gene ID" value="ENSDARG00000061143"/>
</dbReference>
<dbReference type="GeneID" id="559710"/>
<dbReference type="KEGG" id="dre:559710"/>
<dbReference type="AGR" id="ZFIN:ZDB-GENE-030131-4025"/>
<dbReference type="CTD" id="559710"/>
<dbReference type="ZFIN" id="ZDB-GENE-030131-4025">
    <property type="gene designation" value="tapt1b"/>
</dbReference>
<dbReference type="eggNOG" id="KOG2490">
    <property type="taxonomic scope" value="Eukaryota"/>
</dbReference>
<dbReference type="HOGENOM" id="CLU_003655_3_0_1"/>
<dbReference type="InParanoid" id="A2BIE7"/>
<dbReference type="OMA" id="KLYMACH"/>
<dbReference type="OrthoDB" id="29023at2759"/>
<dbReference type="PhylomeDB" id="A2BIE7"/>
<dbReference type="TreeFam" id="TF105962"/>
<dbReference type="PRO" id="PR:A2BIE7"/>
<dbReference type="Proteomes" id="UP000000437">
    <property type="component" value="Alternate scaffold 1"/>
</dbReference>
<dbReference type="Proteomes" id="UP000000437">
    <property type="component" value="Chromosome 1"/>
</dbReference>
<dbReference type="Bgee" id="ENSDARG00000061143">
    <property type="expression patterns" value="Expressed in retina and 23 other cell types or tissues"/>
</dbReference>
<dbReference type="GO" id="GO:0005813">
    <property type="term" value="C:centrosome"/>
    <property type="evidence" value="ECO:0000250"/>
    <property type="project" value="UniProtKB"/>
</dbReference>
<dbReference type="GO" id="GO:0036064">
    <property type="term" value="C:ciliary basal body"/>
    <property type="evidence" value="ECO:0000250"/>
    <property type="project" value="UniProtKB"/>
</dbReference>
<dbReference type="GO" id="GO:0005789">
    <property type="term" value="C:endoplasmic reticulum membrane"/>
    <property type="evidence" value="ECO:0000318"/>
    <property type="project" value="GO_Central"/>
</dbReference>
<dbReference type="GO" id="GO:0051216">
    <property type="term" value="P:cartilage development"/>
    <property type="evidence" value="ECO:0007669"/>
    <property type="project" value="UniProtKB-KW"/>
</dbReference>
<dbReference type="GO" id="GO:0030030">
    <property type="term" value="P:cell projection organization"/>
    <property type="evidence" value="ECO:0007669"/>
    <property type="project" value="UniProtKB-KW"/>
</dbReference>
<dbReference type="GO" id="GO:1904888">
    <property type="term" value="P:cranial skeletal system development"/>
    <property type="evidence" value="ECO:0000315"/>
    <property type="project" value="ZFIN"/>
</dbReference>
<dbReference type="GO" id="GO:0048066">
    <property type="term" value="P:developmental pigmentation"/>
    <property type="evidence" value="ECO:0000315"/>
    <property type="project" value="ZFIN"/>
</dbReference>
<dbReference type="GO" id="GO:0002089">
    <property type="term" value="P:lens morphogenesis in camera-type eye"/>
    <property type="evidence" value="ECO:0000316"/>
    <property type="project" value="ZFIN"/>
</dbReference>
<dbReference type="GO" id="GO:0014032">
    <property type="term" value="P:neural crest cell development"/>
    <property type="evidence" value="ECO:0000315"/>
    <property type="project" value="UniProtKB"/>
</dbReference>
<dbReference type="GO" id="GO:0001503">
    <property type="term" value="P:ossification"/>
    <property type="evidence" value="ECO:0000315"/>
    <property type="project" value="ZFIN"/>
</dbReference>
<dbReference type="GO" id="GO:1903012">
    <property type="term" value="P:positive regulation of bone development"/>
    <property type="evidence" value="ECO:0000315"/>
    <property type="project" value="UniProtKB"/>
</dbReference>
<dbReference type="GO" id="GO:0061036">
    <property type="term" value="P:positive regulation of cartilage development"/>
    <property type="evidence" value="ECO:0000315"/>
    <property type="project" value="UniProtKB"/>
</dbReference>
<dbReference type="GO" id="GO:0045724">
    <property type="term" value="P:positive regulation of cilium assembly"/>
    <property type="evidence" value="ECO:0000315"/>
    <property type="project" value="UniProtKB"/>
</dbReference>
<dbReference type="GO" id="GO:0010842">
    <property type="term" value="P:retina layer formation"/>
    <property type="evidence" value="ECO:0000316"/>
    <property type="project" value="ZFIN"/>
</dbReference>
<dbReference type="InterPro" id="IPR008010">
    <property type="entry name" value="Tatp1"/>
</dbReference>
<dbReference type="PANTHER" id="PTHR13317">
    <property type="entry name" value="TRANSMEMBRANE ANTERIOR POSTERIOR TRANSFORMATION PROTEIN 1 HOMOLOG"/>
    <property type="match status" value="1"/>
</dbReference>
<dbReference type="PANTHER" id="PTHR13317:SF4">
    <property type="entry name" value="TRANSMEMBRANE ANTERIOR POSTERIOR TRANSFORMATION PROTEIN 1 HOMOLOG"/>
    <property type="match status" value="1"/>
</dbReference>
<dbReference type="Pfam" id="PF05346">
    <property type="entry name" value="DUF747"/>
    <property type="match status" value="1"/>
</dbReference>
<proteinExistence type="evidence at transcript level"/>
<name>TAPT1_DANRE</name>
<evidence type="ECO:0000250" key="1">
    <source>
        <dbReference type="UniProtKB" id="Q4VBD2"/>
    </source>
</evidence>
<evidence type="ECO:0000250" key="2">
    <source>
        <dbReference type="UniProtKB" id="Q6NXT6"/>
    </source>
</evidence>
<evidence type="ECO:0000255" key="3"/>
<evidence type="ECO:0000256" key="4">
    <source>
        <dbReference type="SAM" id="MobiDB-lite"/>
    </source>
</evidence>
<evidence type="ECO:0000269" key="5">
    <source>
    </source>
</evidence>
<evidence type="ECO:0000305" key="6"/>
<organism>
    <name type="scientific">Danio rerio</name>
    <name type="common">Zebrafish</name>
    <name type="synonym">Brachydanio rerio</name>
    <dbReference type="NCBI Taxonomy" id="7955"/>
    <lineage>
        <taxon>Eukaryota</taxon>
        <taxon>Metazoa</taxon>
        <taxon>Chordata</taxon>
        <taxon>Craniata</taxon>
        <taxon>Vertebrata</taxon>
        <taxon>Euteleostomi</taxon>
        <taxon>Actinopterygii</taxon>
        <taxon>Neopterygii</taxon>
        <taxon>Teleostei</taxon>
        <taxon>Ostariophysi</taxon>
        <taxon>Cypriniformes</taxon>
        <taxon>Danionidae</taxon>
        <taxon>Danioninae</taxon>
        <taxon>Danio</taxon>
    </lineage>
</organism>